<name>IQEC1_RAT</name>
<organism>
    <name type="scientific">Rattus norvegicus</name>
    <name type="common">Rat</name>
    <dbReference type="NCBI Taxonomy" id="10116"/>
    <lineage>
        <taxon>Eukaryota</taxon>
        <taxon>Metazoa</taxon>
        <taxon>Chordata</taxon>
        <taxon>Craniata</taxon>
        <taxon>Vertebrata</taxon>
        <taxon>Euteleostomi</taxon>
        <taxon>Mammalia</taxon>
        <taxon>Eutheria</taxon>
        <taxon>Euarchontoglires</taxon>
        <taxon>Glires</taxon>
        <taxon>Rodentia</taxon>
        <taxon>Myomorpha</taxon>
        <taxon>Muroidea</taxon>
        <taxon>Muridae</taxon>
        <taxon>Murinae</taxon>
        <taxon>Rattus</taxon>
    </lineage>
</organism>
<accession>A0A0G2JUG7</accession>
<dbReference type="EMBL" id="AABR07061428">
    <property type="status" value="NOT_ANNOTATED_CDS"/>
    <property type="molecule type" value="Genomic_DNA"/>
</dbReference>
<dbReference type="SMR" id="A0A0G2JUG7"/>
<dbReference type="FunCoup" id="A0A0G2JUG7">
    <property type="interactions" value="1940"/>
</dbReference>
<dbReference type="STRING" id="10116.ENSRNOP00000069092"/>
<dbReference type="iPTMnet" id="A0A0G2JUG7"/>
<dbReference type="PhosphoSitePlus" id="A0A0G2JUG7"/>
<dbReference type="PaxDb" id="10116-ENSRNOP00000064590"/>
<dbReference type="AGR" id="RGD:1596313"/>
<dbReference type="RGD" id="1596313">
    <property type="gene designation" value="Iqsec1"/>
</dbReference>
<dbReference type="VEuPathDB" id="HostDB:ENSRNOG00000060350"/>
<dbReference type="eggNOG" id="KOG0931">
    <property type="taxonomic scope" value="Eukaryota"/>
</dbReference>
<dbReference type="InParanoid" id="A0A0G2JUG7"/>
<dbReference type="PRO" id="PR:A0A0G2JUG7"/>
<dbReference type="Proteomes" id="UP000002494">
    <property type="component" value="Chromosome 4"/>
</dbReference>
<dbReference type="Bgee" id="ENSRNOG00000060350">
    <property type="expression patterns" value="Expressed in frontal cortex and 19 other cell types or tissues"/>
</dbReference>
<dbReference type="GO" id="GO:0098978">
    <property type="term" value="C:glutamatergic synapse"/>
    <property type="evidence" value="ECO:0000266"/>
    <property type="project" value="RGD"/>
</dbReference>
<dbReference type="GO" id="GO:0005634">
    <property type="term" value="C:nucleus"/>
    <property type="evidence" value="ECO:0007669"/>
    <property type="project" value="UniProtKB-SubCell"/>
</dbReference>
<dbReference type="GO" id="GO:0099092">
    <property type="term" value="C:postsynaptic density, intracellular component"/>
    <property type="evidence" value="ECO:0000266"/>
    <property type="project" value="RGD"/>
</dbReference>
<dbReference type="GO" id="GO:0098685">
    <property type="term" value="C:Schaffer collateral - CA1 synapse"/>
    <property type="evidence" value="ECO:0000266"/>
    <property type="project" value="RGD"/>
</dbReference>
<dbReference type="GO" id="GO:0008021">
    <property type="term" value="C:synaptic vesicle"/>
    <property type="evidence" value="ECO:0007669"/>
    <property type="project" value="UniProtKB-SubCell"/>
</dbReference>
<dbReference type="GO" id="GO:0005085">
    <property type="term" value="F:guanyl-nucleotide exchange factor activity"/>
    <property type="evidence" value="ECO:0007669"/>
    <property type="project" value="UniProtKB-KW"/>
</dbReference>
<dbReference type="GO" id="GO:0008289">
    <property type="term" value="F:lipid binding"/>
    <property type="evidence" value="ECO:0007669"/>
    <property type="project" value="UniProtKB-KW"/>
</dbReference>
<dbReference type="GO" id="GO:0019901">
    <property type="term" value="F:protein kinase binding"/>
    <property type="evidence" value="ECO:0000266"/>
    <property type="project" value="RGD"/>
</dbReference>
<dbReference type="GO" id="GO:0030036">
    <property type="term" value="P:actin cytoskeleton organization"/>
    <property type="evidence" value="ECO:0000318"/>
    <property type="project" value="GO_Central"/>
</dbReference>
<dbReference type="GO" id="GO:0060996">
    <property type="term" value="P:dendritic spine development"/>
    <property type="evidence" value="ECO:0000266"/>
    <property type="project" value="RGD"/>
</dbReference>
<dbReference type="GO" id="GO:0120183">
    <property type="term" value="P:positive regulation of focal adhesion disassembly"/>
    <property type="evidence" value="ECO:0000266"/>
    <property type="project" value="RGD"/>
</dbReference>
<dbReference type="GO" id="GO:0051549">
    <property type="term" value="P:positive regulation of keratinocyte migration"/>
    <property type="evidence" value="ECO:0000266"/>
    <property type="project" value="RGD"/>
</dbReference>
<dbReference type="GO" id="GO:0051965">
    <property type="term" value="P:positive regulation of synapse assembly"/>
    <property type="evidence" value="ECO:0000315"/>
    <property type="project" value="RGD"/>
</dbReference>
<dbReference type="GO" id="GO:0099170">
    <property type="term" value="P:postsynaptic modulation of chemical synaptic transmission"/>
    <property type="evidence" value="ECO:0000266"/>
    <property type="project" value="RGD"/>
</dbReference>
<dbReference type="GO" id="GO:0032012">
    <property type="term" value="P:regulation of ARF protein signal transduction"/>
    <property type="evidence" value="ECO:0000316"/>
    <property type="project" value="RGD"/>
</dbReference>
<dbReference type="GO" id="GO:0099149">
    <property type="term" value="P:regulation of postsynaptic neurotransmitter receptor internalization"/>
    <property type="evidence" value="ECO:0000315"/>
    <property type="project" value="RGD"/>
</dbReference>
<dbReference type="CDD" id="cd13318">
    <property type="entry name" value="PH_IQSEC"/>
    <property type="match status" value="1"/>
</dbReference>
<dbReference type="CDD" id="cd00171">
    <property type="entry name" value="Sec7"/>
    <property type="match status" value="1"/>
</dbReference>
<dbReference type="FunFam" id="1.10.1000.11:FF:000001">
    <property type="entry name" value="IQ motif and SEC7 domain-containing protein 1"/>
    <property type="match status" value="1"/>
</dbReference>
<dbReference type="FunFam" id="1.10.220.20:FF:000001">
    <property type="entry name" value="IQ motif and SEC7 domain-containing protein 1"/>
    <property type="match status" value="1"/>
</dbReference>
<dbReference type="FunFam" id="2.30.29.30:FF:000004">
    <property type="entry name" value="IQ motif and SEC7 domain-containing protein 1"/>
    <property type="match status" value="1"/>
</dbReference>
<dbReference type="Gene3D" id="1.10.220.20">
    <property type="match status" value="1"/>
</dbReference>
<dbReference type="Gene3D" id="1.10.1000.11">
    <property type="entry name" value="Arf Nucleotide-binding Site Opener,domain 2"/>
    <property type="match status" value="1"/>
</dbReference>
<dbReference type="Gene3D" id="2.30.29.30">
    <property type="entry name" value="Pleckstrin-homology domain (PH domain)/Phosphotyrosine-binding domain (PTB)"/>
    <property type="match status" value="1"/>
</dbReference>
<dbReference type="InterPro" id="IPR033742">
    <property type="entry name" value="IQSEC_PH"/>
</dbReference>
<dbReference type="InterPro" id="IPR011993">
    <property type="entry name" value="PH-like_dom_sf"/>
</dbReference>
<dbReference type="InterPro" id="IPR023394">
    <property type="entry name" value="Sec7_C_sf"/>
</dbReference>
<dbReference type="InterPro" id="IPR000904">
    <property type="entry name" value="Sec7_dom"/>
</dbReference>
<dbReference type="InterPro" id="IPR035999">
    <property type="entry name" value="Sec7_dom_sf"/>
</dbReference>
<dbReference type="PANTHER" id="PTHR10663">
    <property type="entry name" value="GUANYL-NUCLEOTIDE EXCHANGE FACTOR"/>
    <property type="match status" value="1"/>
</dbReference>
<dbReference type="PANTHER" id="PTHR10663:SF327">
    <property type="entry name" value="IQ MOTIF AND SEC7 DOMAIN-CONTAINING PROTEIN 1"/>
    <property type="match status" value="1"/>
</dbReference>
<dbReference type="Pfam" id="PF16453">
    <property type="entry name" value="IQ_SEC7_PH"/>
    <property type="match status" value="1"/>
</dbReference>
<dbReference type="Pfam" id="PF01369">
    <property type="entry name" value="Sec7"/>
    <property type="match status" value="1"/>
</dbReference>
<dbReference type="SMART" id="SM00222">
    <property type="entry name" value="Sec7"/>
    <property type="match status" value="1"/>
</dbReference>
<dbReference type="SUPFAM" id="SSF50729">
    <property type="entry name" value="PH domain-like"/>
    <property type="match status" value="1"/>
</dbReference>
<dbReference type="SUPFAM" id="SSF48425">
    <property type="entry name" value="Sec7 domain"/>
    <property type="match status" value="1"/>
</dbReference>
<dbReference type="PROSITE" id="PS50096">
    <property type="entry name" value="IQ"/>
    <property type="match status" value="1"/>
</dbReference>
<dbReference type="PROSITE" id="PS50190">
    <property type="entry name" value="SEC7"/>
    <property type="match status" value="1"/>
</dbReference>
<comment type="function">
    <text evidence="1 2 6">Guanine nucleotide exchange factor for ARF1 and ARF6. Guanine nucleotide exchange factor activity is enhanced by lipid binding. Accelerates GTP binding by ARFs of all three classes. Guanine nucleotide exchange protein for ARF6, mediating internalization of beta-1 integrin. Involved in neuronal development (By similarity). In neurons, plays a role in the control of vesicle formation by endocytoc cargo. Upon long term depression, interacts with GRIA2 and mediates the activation of ARF6 to internalize synaptic AMPAR receptors (PubMed:20547133).</text>
</comment>
<comment type="subunit">
    <text evidence="1 6">Interacts with ARF1 and ARF6. Interacts with GRIA2; the interaction is required for ARF6 activation (PubMed:20547133).</text>
</comment>
<comment type="subcellular location">
    <subcellularLocation>
        <location evidence="1">Cytoplasm</location>
    </subcellularLocation>
    <subcellularLocation>
        <location evidence="1">Nucleus</location>
    </subcellularLocation>
    <subcellularLocation>
        <location evidence="2">Postsynaptic density</location>
    </subcellularLocation>
    <subcellularLocation>
        <location evidence="2">Cytoplasmic vesicle</location>
        <location evidence="2">Secretory vesicle</location>
        <location evidence="2">Synaptic vesicle</location>
    </subcellularLocation>
    <text evidence="1">At steady state, may be preferentially cytosolic.</text>
</comment>
<comment type="domain">
    <text evidence="1">The PH domain mediates interaction with lipid membranes that contain phosphatidylinositol-4,5-bisphosphate, but does not bind membranes that lack phosphatidylinositol-4,5-bisphosphate.</text>
</comment>
<comment type="similarity">
    <text evidence="8">Belongs to the BRAG family.</text>
</comment>
<gene>
    <name evidence="9" type="primary">Iqsec1</name>
    <name evidence="7" type="synonym">Brag2</name>
</gene>
<reference key="1">
    <citation type="journal article" date="2004" name="Nature">
        <title>Genome sequence of the Brown Norway rat yields insights into mammalian evolution.</title>
        <authorList>
            <person name="Gibbs R.A."/>
            <person name="Weinstock G.M."/>
            <person name="Metzker M.L."/>
            <person name="Muzny D.M."/>
            <person name="Sodergren E.J."/>
            <person name="Scherer S."/>
            <person name="Scott G."/>
            <person name="Steffen D."/>
            <person name="Worley K.C."/>
            <person name="Burch P.E."/>
            <person name="Okwuonu G."/>
            <person name="Hines S."/>
            <person name="Lewis L."/>
            <person name="Deramo C."/>
            <person name="Delgado O."/>
            <person name="Dugan-Rocha S."/>
            <person name="Miner G."/>
            <person name="Morgan M."/>
            <person name="Hawes A."/>
            <person name="Gill R."/>
            <person name="Holt R.A."/>
            <person name="Adams M.D."/>
            <person name="Amanatides P.G."/>
            <person name="Baden-Tillson H."/>
            <person name="Barnstead M."/>
            <person name="Chin S."/>
            <person name="Evans C.A."/>
            <person name="Ferriera S."/>
            <person name="Fosler C."/>
            <person name="Glodek A."/>
            <person name="Gu Z."/>
            <person name="Jennings D."/>
            <person name="Kraft C.L."/>
            <person name="Nguyen T."/>
            <person name="Pfannkoch C.M."/>
            <person name="Sitter C."/>
            <person name="Sutton G.G."/>
            <person name="Venter J.C."/>
            <person name="Woodage T."/>
            <person name="Smith D."/>
            <person name="Lee H.-M."/>
            <person name="Gustafson E."/>
            <person name="Cahill P."/>
            <person name="Kana A."/>
            <person name="Doucette-Stamm L."/>
            <person name="Weinstock K."/>
            <person name="Fechtel K."/>
            <person name="Weiss R.B."/>
            <person name="Dunn D.M."/>
            <person name="Green E.D."/>
            <person name="Blakesley R.W."/>
            <person name="Bouffard G.G."/>
            <person name="De Jong P.J."/>
            <person name="Osoegawa K."/>
            <person name="Zhu B."/>
            <person name="Marra M."/>
            <person name="Schein J."/>
            <person name="Bosdet I."/>
            <person name="Fjell C."/>
            <person name="Jones S."/>
            <person name="Krzywinski M."/>
            <person name="Mathewson C."/>
            <person name="Siddiqui A."/>
            <person name="Wye N."/>
            <person name="McPherson J."/>
            <person name="Zhao S."/>
            <person name="Fraser C.M."/>
            <person name="Shetty J."/>
            <person name="Shatsman S."/>
            <person name="Geer K."/>
            <person name="Chen Y."/>
            <person name="Abramzon S."/>
            <person name="Nierman W.C."/>
            <person name="Havlak P.H."/>
            <person name="Chen R."/>
            <person name="Durbin K.J."/>
            <person name="Egan A."/>
            <person name="Ren Y."/>
            <person name="Song X.-Z."/>
            <person name="Li B."/>
            <person name="Liu Y."/>
            <person name="Qin X."/>
            <person name="Cawley S."/>
            <person name="Cooney A.J."/>
            <person name="D'Souza L.M."/>
            <person name="Martin K."/>
            <person name="Wu J.Q."/>
            <person name="Gonzalez-Garay M.L."/>
            <person name="Jackson A.R."/>
            <person name="Kalafus K.J."/>
            <person name="McLeod M.P."/>
            <person name="Milosavljevic A."/>
            <person name="Virk D."/>
            <person name="Volkov A."/>
            <person name="Wheeler D.A."/>
            <person name="Zhang Z."/>
            <person name="Bailey J.A."/>
            <person name="Eichler E.E."/>
            <person name="Tuzun E."/>
            <person name="Birney E."/>
            <person name="Mongin E."/>
            <person name="Ureta-Vidal A."/>
            <person name="Woodwark C."/>
            <person name="Zdobnov E."/>
            <person name="Bork P."/>
            <person name="Suyama M."/>
            <person name="Torrents D."/>
            <person name="Alexandersson M."/>
            <person name="Trask B.J."/>
            <person name="Young J.M."/>
            <person name="Huang H."/>
            <person name="Wang H."/>
            <person name="Xing H."/>
            <person name="Daniels S."/>
            <person name="Gietzen D."/>
            <person name="Schmidt J."/>
            <person name="Stevens K."/>
            <person name="Vitt U."/>
            <person name="Wingrove J."/>
            <person name="Camara F."/>
            <person name="Mar Alba M."/>
            <person name="Abril J.F."/>
            <person name="Guigo R."/>
            <person name="Smit A."/>
            <person name="Dubchak I."/>
            <person name="Rubin E.M."/>
            <person name="Couronne O."/>
            <person name="Poliakov A."/>
            <person name="Huebner N."/>
            <person name="Ganten D."/>
            <person name="Goesele C."/>
            <person name="Hummel O."/>
            <person name="Kreitler T."/>
            <person name="Lee Y.-A."/>
            <person name="Monti J."/>
            <person name="Schulz H."/>
            <person name="Zimdahl H."/>
            <person name="Himmelbauer H."/>
            <person name="Lehrach H."/>
            <person name="Jacob H.J."/>
            <person name="Bromberg S."/>
            <person name="Gullings-Handley J."/>
            <person name="Jensen-Seaman M.I."/>
            <person name="Kwitek A.E."/>
            <person name="Lazar J."/>
            <person name="Pasko D."/>
            <person name="Tonellato P.J."/>
            <person name="Twigger S."/>
            <person name="Ponting C.P."/>
            <person name="Duarte J.M."/>
            <person name="Rice S."/>
            <person name="Goodstadt L."/>
            <person name="Beatson S.A."/>
            <person name="Emes R.D."/>
            <person name="Winter E.E."/>
            <person name="Webber C."/>
            <person name="Brandt P."/>
            <person name="Nyakatura G."/>
            <person name="Adetobi M."/>
            <person name="Chiaromonte F."/>
            <person name="Elnitski L."/>
            <person name="Eswara P."/>
            <person name="Hardison R.C."/>
            <person name="Hou M."/>
            <person name="Kolbe D."/>
            <person name="Makova K."/>
            <person name="Miller W."/>
            <person name="Nekrutenko A."/>
            <person name="Riemer C."/>
            <person name="Schwartz S."/>
            <person name="Taylor J."/>
            <person name="Yang S."/>
            <person name="Zhang Y."/>
            <person name="Lindpaintner K."/>
            <person name="Andrews T.D."/>
            <person name="Caccamo M."/>
            <person name="Clamp M."/>
            <person name="Clarke L."/>
            <person name="Curwen V."/>
            <person name="Durbin R.M."/>
            <person name="Eyras E."/>
            <person name="Searle S.M."/>
            <person name="Cooper G.M."/>
            <person name="Batzoglou S."/>
            <person name="Brudno M."/>
            <person name="Sidow A."/>
            <person name="Stone E.A."/>
            <person name="Payseur B.A."/>
            <person name="Bourque G."/>
            <person name="Lopez-Otin C."/>
            <person name="Puente X.S."/>
            <person name="Chakrabarti K."/>
            <person name="Chatterji S."/>
            <person name="Dewey C."/>
            <person name="Pachter L."/>
            <person name="Bray N."/>
            <person name="Yap V.B."/>
            <person name="Caspi A."/>
            <person name="Tesler G."/>
            <person name="Pevzner P.A."/>
            <person name="Haussler D."/>
            <person name="Roskin K.M."/>
            <person name="Baertsch R."/>
            <person name="Clawson H."/>
            <person name="Furey T.S."/>
            <person name="Hinrichs A.S."/>
            <person name="Karolchik D."/>
            <person name="Kent W.J."/>
            <person name="Rosenbloom K.R."/>
            <person name="Trumbower H."/>
            <person name="Weirauch M."/>
            <person name="Cooper D.N."/>
            <person name="Stenson P.D."/>
            <person name="Ma B."/>
            <person name="Brent M."/>
            <person name="Arumugam M."/>
            <person name="Shteynberg D."/>
            <person name="Copley R.R."/>
            <person name="Taylor M.S."/>
            <person name="Riethman H."/>
            <person name="Mudunuri U."/>
            <person name="Peterson J."/>
            <person name="Guyer M."/>
            <person name="Felsenfeld A."/>
            <person name="Old S."/>
            <person name="Mockrin S."/>
            <person name="Collins F.S."/>
        </authorList>
    </citation>
    <scope>NUCLEOTIDE SEQUENCE [LARGE SCALE GENOMIC DNA]</scope>
    <source>
        <strain>Brown Norway</strain>
    </source>
</reference>
<reference evidence="10" key="2">
    <citation type="journal article" date="2012" name="Nat. Commun.">
        <title>Quantitative maps of protein phosphorylation sites across 14 different rat organs and tissues.</title>
        <authorList>
            <person name="Lundby A."/>
            <person name="Secher A."/>
            <person name="Lage K."/>
            <person name="Nordsborg N.B."/>
            <person name="Dmytriyev A."/>
            <person name="Lundby C."/>
            <person name="Olsen J.V."/>
        </authorList>
    </citation>
    <scope>IDENTIFICATION BY MASS SPECTROMETRY [LARGE SCALE ANALYSIS]</scope>
</reference>
<reference key="3">
    <citation type="journal article" date="2010" name="Neuron">
        <title>AMPA receptor signaling through BRAG2 and Arf6 critical for long-term synaptic depression.</title>
        <authorList>
            <person name="Scholz R."/>
            <person name="Berberich S."/>
            <person name="Rathgeber L."/>
            <person name="Kolleker A."/>
            <person name="Koehr G."/>
            <person name="Kornau H.C."/>
        </authorList>
    </citation>
    <scope>INTERACTION WITH GRIA2</scope>
    <scope>FUNCTION</scope>
</reference>
<proteinExistence type="evidence at protein level"/>
<evidence type="ECO:0000250" key="1">
    <source>
        <dbReference type="UniProtKB" id="Q6DN90"/>
    </source>
</evidence>
<evidence type="ECO:0000250" key="2">
    <source>
        <dbReference type="UniProtKB" id="Q8R0S2"/>
    </source>
</evidence>
<evidence type="ECO:0000255" key="3">
    <source>
        <dbReference type="PROSITE-ProRule" id="PRU00116"/>
    </source>
</evidence>
<evidence type="ECO:0000255" key="4">
    <source>
        <dbReference type="PROSITE-ProRule" id="PRU00189"/>
    </source>
</evidence>
<evidence type="ECO:0000256" key="5">
    <source>
        <dbReference type="SAM" id="MobiDB-lite"/>
    </source>
</evidence>
<evidence type="ECO:0000269" key="6">
    <source>
    </source>
</evidence>
<evidence type="ECO:0000303" key="7">
    <source>
    </source>
</evidence>
<evidence type="ECO:0000305" key="8"/>
<evidence type="ECO:0000312" key="9">
    <source>
        <dbReference type="RGD" id="1596313"/>
    </source>
</evidence>
<evidence type="ECO:0007744" key="10">
    <source>
    </source>
</evidence>
<protein>
    <recommendedName>
        <fullName evidence="8">IQ motif and SEC7 domain-containing protein 1</fullName>
    </recommendedName>
</protein>
<keyword id="KW-0175">Coiled coil</keyword>
<keyword id="KW-0963">Cytoplasm</keyword>
<keyword id="KW-0968">Cytoplasmic vesicle</keyword>
<keyword id="KW-0344">Guanine-nucleotide releasing factor</keyword>
<keyword id="KW-0446">Lipid-binding</keyword>
<keyword id="KW-0539">Nucleus</keyword>
<keyword id="KW-0597">Phosphoprotein</keyword>
<keyword id="KW-1185">Reference proteome</keyword>
<keyword id="KW-0770">Synapse</keyword>
<feature type="chain" id="PRO_0000450080" description="IQ motif and SEC7 domain-containing protein 1">
    <location>
        <begin position="1"/>
        <end position="962"/>
    </location>
</feature>
<feature type="domain" description="IQ" evidence="3">
    <location>
        <begin position="134"/>
        <end position="163"/>
    </location>
</feature>
<feature type="domain" description="SEC7" evidence="4">
    <location>
        <begin position="516"/>
        <end position="709"/>
    </location>
</feature>
<feature type="domain" description="PH">
    <location>
        <begin position="773"/>
        <end position="865"/>
    </location>
</feature>
<feature type="region of interest" description="Disordered" evidence="5">
    <location>
        <begin position="1"/>
        <end position="96"/>
    </location>
</feature>
<feature type="region of interest" description="Disordered" evidence="5">
    <location>
        <begin position="264"/>
        <end position="292"/>
    </location>
</feature>
<feature type="region of interest" description="Disordered" evidence="5">
    <location>
        <begin position="311"/>
        <end position="333"/>
    </location>
</feature>
<feature type="region of interest" description="Disordered" evidence="5">
    <location>
        <begin position="348"/>
        <end position="516"/>
    </location>
</feature>
<feature type="region of interest" description="Disordered" evidence="5">
    <location>
        <begin position="921"/>
        <end position="962"/>
    </location>
</feature>
<feature type="compositionally biased region" description="Low complexity" evidence="5">
    <location>
        <begin position="8"/>
        <end position="19"/>
    </location>
</feature>
<feature type="compositionally biased region" description="Polar residues" evidence="5">
    <location>
        <begin position="30"/>
        <end position="39"/>
    </location>
</feature>
<feature type="compositionally biased region" description="Basic and acidic residues" evidence="5">
    <location>
        <begin position="273"/>
        <end position="292"/>
    </location>
</feature>
<feature type="compositionally biased region" description="Basic and acidic residues" evidence="5">
    <location>
        <begin position="365"/>
        <end position="375"/>
    </location>
</feature>
<feature type="compositionally biased region" description="Basic and acidic residues" evidence="5">
    <location>
        <begin position="429"/>
        <end position="445"/>
    </location>
</feature>
<feature type="compositionally biased region" description="Low complexity" evidence="5">
    <location>
        <begin position="470"/>
        <end position="488"/>
    </location>
</feature>
<feature type="compositionally biased region" description="Polar residues" evidence="5">
    <location>
        <begin position="939"/>
        <end position="948"/>
    </location>
</feature>
<feature type="modified residue" description="Phosphoserine" evidence="1">
    <location>
        <position position="89"/>
    </location>
</feature>
<feature type="modified residue" description="Phosphoserine" evidence="2">
    <location>
        <position position="105"/>
    </location>
</feature>
<feature type="modified residue" description="Phosphoserine" evidence="2">
    <location>
        <position position="107"/>
    </location>
</feature>
<feature type="modified residue" description="Phosphoserine" evidence="2">
    <location>
        <position position="180"/>
    </location>
</feature>
<feature type="modified residue" description="Phosphoserine" evidence="2">
    <location>
        <position position="248"/>
    </location>
</feature>
<feature type="modified residue" description="Phosphoserine" evidence="2">
    <location>
        <position position="252"/>
    </location>
</feature>
<feature type="modified residue" description="Phosphoserine" evidence="2">
    <location>
        <position position="511"/>
    </location>
</feature>
<feature type="modified residue" description="Phosphoserine" evidence="2">
    <location>
        <position position="514"/>
    </location>
</feature>
<feature type="modified residue" description="Phosphoserine" evidence="1">
    <location>
        <position position="891"/>
    </location>
</feature>
<feature type="modified residue" description="Phosphotyrosine" evidence="1">
    <location>
        <position position="910"/>
    </location>
</feature>
<feature type="modified residue" description="Phosphoserine" evidence="1">
    <location>
        <position position="923"/>
    </location>
</feature>
<feature type="modified residue" description="Phosphoserine" evidence="2">
    <location>
        <position position="924"/>
    </location>
</feature>
<sequence>MACRRRYLSSLETGSSLSTDRYSVEGEAPSSETGTSLDSPSAYHQGPLVPGSSLSPDHYEHTSVGAYGLYAGPGPQQRTRRPRLQHSTSVLRKQAEEEAIKRSRSLSESYELSSDLQDKQVEMLERKYGGRLVTRHAARTIQTAFRQYQMNKNFERLRSSMSENRMSRRIVLSNMRMQFSFEGPEKVHSSYFEGKQVSVTNDGSQLGALVPSECGDLSDPALKSPAPSSDFADAITELEDAFSRQVKSLAESIDDALNCRSLHSEEVPASDTARARDTEPKPGLHGMDHRKLDEMTASYSDVTLYIDEEELSPPLPLSQAGDRPSSTESDLRLRSGGAAQDYWALAHKEDKADTDTSCRSTPSLERPEPRLRVEHLPLLTIEPPSDSSVELSDRSDRSSLKRQSAYERSLGGQQGSPKHGPHGGPPKGLPREEPELRPRPPRPLESHLAINGSANRQSKSESDYSDGDNDSINSTSNSNDTINCSSESSSRDSLREQTLSKQTYHKETRNSWDSPAFSNDVIRKRHYRIGLNLFNKKPEKGIQYLIERGFVPDTPVGVAHFLLQRKGLSRQMIGEFLGNRQKQFNRDVLDCVVDEMDFSAMELDEALRKFQAHIRVQGEAQKVERLIEAFSQRYCVCNPGVVRQFRNPDTIFILAFAIILLNTDMYSPNVKPERKMKLEDFVKNLRGVDDGEDIPRETLIGIYERIRKRELKTNEDHVSQVQKVEKLIVGKKPIGSLHHGLGCVLSLPHRRLVCYCRLFEVPDPNKPQKLGLHQREIFLFNDLLVVTKIFQKKKNSVTYSFRQSFSLYGMQVLLFENQYYPNGIRLTSAVPGADIKVLINFNAPNPQDRKKFTDDLRESVAEVQEMEKHRIESELEKQKGVVRPSMSQCSSLKKESGNGTLSRACLDDSYASGEGLKRSALSSSLRDLSEAGKRGRRSSAGSLESNVEFQPFQPSQPPVLCS</sequence>